<keyword id="KW-0997">Cell inner membrane</keyword>
<keyword id="KW-1003">Cell membrane</keyword>
<keyword id="KW-0342">GTP-binding</keyword>
<keyword id="KW-0378">Hydrolase</keyword>
<keyword id="KW-0472">Membrane</keyword>
<keyword id="KW-0547">Nucleotide-binding</keyword>
<keyword id="KW-0648">Protein biosynthesis</keyword>
<comment type="function">
    <text evidence="1">Required for accurate and efficient protein synthesis under certain stress conditions. May act as a fidelity factor of the translation reaction, by catalyzing a one-codon backward translocation of tRNAs on improperly translocated ribosomes. Back-translocation proceeds from a post-translocation (POST) complex to a pre-translocation (PRE) complex, thus giving elongation factor G a second chance to translocate the tRNAs correctly. Binds to ribosomes in a GTP-dependent manner.</text>
</comment>
<comment type="catalytic activity">
    <reaction evidence="1">
        <text>GTP + H2O = GDP + phosphate + H(+)</text>
        <dbReference type="Rhea" id="RHEA:19669"/>
        <dbReference type="ChEBI" id="CHEBI:15377"/>
        <dbReference type="ChEBI" id="CHEBI:15378"/>
        <dbReference type="ChEBI" id="CHEBI:37565"/>
        <dbReference type="ChEBI" id="CHEBI:43474"/>
        <dbReference type="ChEBI" id="CHEBI:58189"/>
        <dbReference type="EC" id="3.6.5.n1"/>
    </reaction>
</comment>
<comment type="subcellular location">
    <subcellularLocation>
        <location evidence="1">Cell inner membrane</location>
        <topology evidence="1">Peripheral membrane protein</topology>
        <orientation evidence="1">Cytoplasmic side</orientation>
    </subcellularLocation>
</comment>
<comment type="similarity">
    <text evidence="1">Belongs to the TRAFAC class translation factor GTPase superfamily. Classic translation factor GTPase family. LepA subfamily.</text>
</comment>
<gene>
    <name evidence="1" type="primary">lepA</name>
    <name type="ordered locus">BAPKO_0089</name>
    <name type="ordered locus">BafPKo_0086</name>
</gene>
<organism>
    <name type="scientific">Borreliella afzelii (strain PKo)</name>
    <name type="common">Borrelia afzelii</name>
    <dbReference type="NCBI Taxonomy" id="390236"/>
    <lineage>
        <taxon>Bacteria</taxon>
        <taxon>Pseudomonadati</taxon>
        <taxon>Spirochaetota</taxon>
        <taxon>Spirochaetia</taxon>
        <taxon>Spirochaetales</taxon>
        <taxon>Borreliaceae</taxon>
        <taxon>Borreliella</taxon>
    </lineage>
</organism>
<proteinExistence type="inferred from homology"/>
<feature type="chain" id="PRO_0000265641" description="Elongation factor 4">
    <location>
        <begin position="1"/>
        <end position="601"/>
    </location>
</feature>
<feature type="domain" description="tr-type G">
    <location>
        <begin position="5"/>
        <end position="187"/>
    </location>
</feature>
<feature type="binding site" evidence="1">
    <location>
        <begin position="17"/>
        <end position="22"/>
    </location>
    <ligand>
        <name>GTP</name>
        <dbReference type="ChEBI" id="CHEBI:37565"/>
    </ligand>
</feature>
<feature type="binding site" evidence="1">
    <location>
        <begin position="134"/>
        <end position="137"/>
    </location>
    <ligand>
        <name>GTP</name>
        <dbReference type="ChEBI" id="CHEBI:37565"/>
    </ligand>
</feature>
<reference key="1">
    <citation type="journal article" date="2006" name="BMC Genomics">
        <title>Comparative genome analysis: selection pressure on the Borrelia vls cassettes is essential for infectivity.</title>
        <authorList>
            <person name="Gloeckner G."/>
            <person name="Schulte-Spechtel U."/>
            <person name="Schilhabel M."/>
            <person name="Felder M."/>
            <person name="Suehnel J."/>
            <person name="Wilske B."/>
            <person name="Platzer M."/>
        </authorList>
    </citation>
    <scope>NUCLEOTIDE SEQUENCE [LARGE SCALE GENOMIC DNA]</scope>
    <source>
        <strain>PKo</strain>
    </source>
</reference>
<reference key="2">
    <citation type="journal article" date="2011" name="J. Bacteriol.">
        <title>Whole-genome sequences of two Borrelia afzelii and two Borrelia garinii Lyme disease agent isolates.</title>
        <authorList>
            <person name="Casjens S.R."/>
            <person name="Mongodin E.F."/>
            <person name="Qiu W.G."/>
            <person name="Dunn J.J."/>
            <person name="Luft B.J."/>
            <person name="Fraser-Liggett C.M."/>
            <person name="Schutzer S.E."/>
        </authorList>
    </citation>
    <scope>NUCLEOTIDE SEQUENCE [LARGE SCALE GENOMIC DNA]</scope>
    <source>
        <strain>PKo</strain>
    </source>
</reference>
<protein>
    <recommendedName>
        <fullName evidence="1">Elongation factor 4</fullName>
        <shortName evidence="1">EF-4</shortName>
        <ecNumber evidence="1">3.6.5.n1</ecNumber>
    </recommendedName>
    <alternativeName>
        <fullName evidence="1">Ribosomal back-translocase LepA</fullName>
    </alternativeName>
</protein>
<dbReference type="EC" id="3.6.5.n1" evidence="1"/>
<dbReference type="EMBL" id="CP000395">
    <property type="protein sequence ID" value="ABH01352.1"/>
    <property type="molecule type" value="Genomic_DNA"/>
</dbReference>
<dbReference type="EMBL" id="CP002933">
    <property type="protein sequence ID" value="AEL69319.1"/>
    <property type="molecule type" value="Genomic_DNA"/>
</dbReference>
<dbReference type="RefSeq" id="WP_011600827.1">
    <property type="nucleotide sequence ID" value="NC_008277.1"/>
</dbReference>
<dbReference type="SMR" id="Q0SP76"/>
<dbReference type="STRING" id="29518.BLA32_03850"/>
<dbReference type="KEGG" id="baf:BAPKO_0089"/>
<dbReference type="KEGG" id="bafz:BafPKo_0086"/>
<dbReference type="PATRIC" id="fig|390236.22.peg.85"/>
<dbReference type="eggNOG" id="COG0481">
    <property type="taxonomic scope" value="Bacteria"/>
</dbReference>
<dbReference type="HOGENOM" id="CLU_009995_3_3_12"/>
<dbReference type="OrthoDB" id="9804431at2"/>
<dbReference type="Proteomes" id="UP000005216">
    <property type="component" value="Chromosome"/>
</dbReference>
<dbReference type="GO" id="GO:0005886">
    <property type="term" value="C:plasma membrane"/>
    <property type="evidence" value="ECO:0007669"/>
    <property type="project" value="UniProtKB-SubCell"/>
</dbReference>
<dbReference type="GO" id="GO:0005525">
    <property type="term" value="F:GTP binding"/>
    <property type="evidence" value="ECO:0007669"/>
    <property type="project" value="UniProtKB-UniRule"/>
</dbReference>
<dbReference type="GO" id="GO:0003924">
    <property type="term" value="F:GTPase activity"/>
    <property type="evidence" value="ECO:0007669"/>
    <property type="project" value="UniProtKB-UniRule"/>
</dbReference>
<dbReference type="GO" id="GO:0043022">
    <property type="term" value="F:ribosome binding"/>
    <property type="evidence" value="ECO:0007669"/>
    <property type="project" value="UniProtKB-UniRule"/>
</dbReference>
<dbReference type="GO" id="GO:0003746">
    <property type="term" value="F:translation elongation factor activity"/>
    <property type="evidence" value="ECO:0007669"/>
    <property type="project" value="UniProtKB-UniRule"/>
</dbReference>
<dbReference type="GO" id="GO:0045727">
    <property type="term" value="P:positive regulation of translation"/>
    <property type="evidence" value="ECO:0007669"/>
    <property type="project" value="UniProtKB-UniRule"/>
</dbReference>
<dbReference type="CDD" id="cd03699">
    <property type="entry name" value="EF4_II"/>
    <property type="match status" value="1"/>
</dbReference>
<dbReference type="CDD" id="cd16260">
    <property type="entry name" value="EF4_III"/>
    <property type="match status" value="1"/>
</dbReference>
<dbReference type="CDD" id="cd01890">
    <property type="entry name" value="LepA"/>
    <property type="match status" value="1"/>
</dbReference>
<dbReference type="CDD" id="cd03709">
    <property type="entry name" value="lepA_C"/>
    <property type="match status" value="1"/>
</dbReference>
<dbReference type="FunFam" id="3.40.50.300:FF:000078">
    <property type="entry name" value="Elongation factor 4"/>
    <property type="match status" value="1"/>
</dbReference>
<dbReference type="FunFam" id="2.40.30.10:FF:000015">
    <property type="entry name" value="Translation factor GUF1, mitochondrial"/>
    <property type="match status" value="1"/>
</dbReference>
<dbReference type="FunFam" id="3.30.70.240:FF:000007">
    <property type="entry name" value="Translation factor GUF1, mitochondrial"/>
    <property type="match status" value="1"/>
</dbReference>
<dbReference type="FunFam" id="3.30.70.2570:FF:000001">
    <property type="entry name" value="Translation factor GUF1, mitochondrial"/>
    <property type="match status" value="1"/>
</dbReference>
<dbReference type="FunFam" id="3.30.70.870:FF:000004">
    <property type="entry name" value="Translation factor GUF1, mitochondrial"/>
    <property type="match status" value="1"/>
</dbReference>
<dbReference type="Gene3D" id="3.30.70.240">
    <property type="match status" value="1"/>
</dbReference>
<dbReference type="Gene3D" id="3.30.70.2570">
    <property type="entry name" value="Elongation factor 4, C-terminal domain"/>
    <property type="match status" value="1"/>
</dbReference>
<dbReference type="Gene3D" id="3.30.70.870">
    <property type="entry name" value="Elongation Factor G (Translational Gtpase), domain 3"/>
    <property type="match status" value="1"/>
</dbReference>
<dbReference type="Gene3D" id="3.40.50.300">
    <property type="entry name" value="P-loop containing nucleotide triphosphate hydrolases"/>
    <property type="match status" value="1"/>
</dbReference>
<dbReference type="Gene3D" id="2.40.30.10">
    <property type="entry name" value="Translation factors"/>
    <property type="match status" value="1"/>
</dbReference>
<dbReference type="HAMAP" id="MF_00071">
    <property type="entry name" value="LepA"/>
    <property type="match status" value="1"/>
</dbReference>
<dbReference type="InterPro" id="IPR006297">
    <property type="entry name" value="EF-4"/>
</dbReference>
<dbReference type="InterPro" id="IPR041095">
    <property type="entry name" value="EFG_II"/>
</dbReference>
<dbReference type="InterPro" id="IPR035647">
    <property type="entry name" value="EFG_III/V"/>
</dbReference>
<dbReference type="InterPro" id="IPR000640">
    <property type="entry name" value="EFG_V-like"/>
</dbReference>
<dbReference type="InterPro" id="IPR004161">
    <property type="entry name" value="EFTu-like_2"/>
</dbReference>
<dbReference type="InterPro" id="IPR031157">
    <property type="entry name" value="G_TR_CS"/>
</dbReference>
<dbReference type="InterPro" id="IPR038363">
    <property type="entry name" value="LepA_C_sf"/>
</dbReference>
<dbReference type="InterPro" id="IPR013842">
    <property type="entry name" value="LepA_CTD"/>
</dbReference>
<dbReference type="InterPro" id="IPR035654">
    <property type="entry name" value="LepA_IV"/>
</dbReference>
<dbReference type="InterPro" id="IPR027417">
    <property type="entry name" value="P-loop_NTPase"/>
</dbReference>
<dbReference type="InterPro" id="IPR005225">
    <property type="entry name" value="Small_GTP-bd"/>
</dbReference>
<dbReference type="InterPro" id="IPR000795">
    <property type="entry name" value="T_Tr_GTP-bd_dom"/>
</dbReference>
<dbReference type="NCBIfam" id="TIGR01393">
    <property type="entry name" value="lepA"/>
    <property type="match status" value="1"/>
</dbReference>
<dbReference type="NCBIfam" id="TIGR00231">
    <property type="entry name" value="small_GTP"/>
    <property type="match status" value="1"/>
</dbReference>
<dbReference type="PANTHER" id="PTHR43512:SF4">
    <property type="entry name" value="TRANSLATION FACTOR GUF1 HOMOLOG, CHLOROPLASTIC"/>
    <property type="match status" value="1"/>
</dbReference>
<dbReference type="PANTHER" id="PTHR43512">
    <property type="entry name" value="TRANSLATION FACTOR GUF1-RELATED"/>
    <property type="match status" value="1"/>
</dbReference>
<dbReference type="Pfam" id="PF00679">
    <property type="entry name" value="EFG_C"/>
    <property type="match status" value="1"/>
</dbReference>
<dbReference type="Pfam" id="PF14492">
    <property type="entry name" value="EFG_III"/>
    <property type="match status" value="1"/>
</dbReference>
<dbReference type="Pfam" id="PF00009">
    <property type="entry name" value="GTP_EFTU"/>
    <property type="match status" value="1"/>
</dbReference>
<dbReference type="Pfam" id="PF03144">
    <property type="entry name" value="GTP_EFTU_D2"/>
    <property type="match status" value="1"/>
</dbReference>
<dbReference type="Pfam" id="PF06421">
    <property type="entry name" value="LepA_C"/>
    <property type="match status" value="1"/>
</dbReference>
<dbReference type="PRINTS" id="PR00315">
    <property type="entry name" value="ELONGATNFCT"/>
</dbReference>
<dbReference type="SMART" id="SM00838">
    <property type="entry name" value="EFG_C"/>
    <property type="match status" value="1"/>
</dbReference>
<dbReference type="SUPFAM" id="SSF54980">
    <property type="entry name" value="EF-G C-terminal domain-like"/>
    <property type="match status" value="2"/>
</dbReference>
<dbReference type="SUPFAM" id="SSF52540">
    <property type="entry name" value="P-loop containing nucleoside triphosphate hydrolases"/>
    <property type="match status" value="1"/>
</dbReference>
<dbReference type="PROSITE" id="PS00301">
    <property type="entry name" value="G_TR_1"/>
    <property type="match status" value="1"/>
</dbReference>
<dbReference type="PROSITE" id="PS51722">
    <property type="entry name" value="G_TR_2"/>
    <property type="match status" value="1"/>
</dbReference>
<name>LEPA_BORAP</name>
<accession>Q0SP76</accession>
<accession>G0IQT3</accession>
<sequence>MSISIRKKNFCIIAHIDHGKSTLADRFIQKAKIISDRDFKSQMLDSMEIERERGITIKSQAVTITYKSNDGDFYELNFVDTPGHVDFSYEVSRAISSCEGALLLIDASQGIQAQTVSNFYMAFEHDLEIIPVINKIDLPNANVDFIKKQIKNDLGLNDELAISISAKNGIGIDDLLEAICKYVPSPKGSIKDPLRALIFDSHYDSYRGVVVHFRIFEGQIKTGDKIRLMHTNSDYLIEEIGVFKILLERKDRLEAGDVGYFIAGIKNISDVKIGDTVTLCDCPALSPLEGFKEVKPVVFSSVYPVDANQYDDLLRAMDRLKLNDASLTFEKDSSSALGHGFKCGFLGLLHLEVIQERIEREFDLNVILTSPSVRYKIIPKKGKSYFIESPEQFPGNEAIESVLEPYIRANIIVPTEFLGNIMSVCLLKRGVQTNLIYLNTKRVELIYKMPLAEILFDFYDKIKSVSRGYASFDYELLDYEYTDLVRLDILVNGDRVDALSQLVFKDSARTKAVGICKKLKDEIARQQFKIAIQGAIGSNVIARETISPVRKDVTAKCYGGDITRKRKLLEKQKEGKKRMKMVGNVEIPQSVFLSVLKSNDN</sequence>
<evidence type="ECO:0000255" key="1">
    <source>
        <dbReference type="HAMAP-Rule" id="MF_00071"/>
    </source>
</evidence>